<accession>Q3JXV6</accession>
<dbReference type="EC" id="7.1.2.2" evidence="1"/>
<dbReference type="EMBL" id="CP000124">
    <property type="protein sequence ID" value="ABA50909.1"/>
    <property type="molecule type" value="Genomic_DNA"/>
</dbReference>
<dbReference type="SMR" id="Q3JXV6"/>
<dbReference type="EnsemblBacteria" id="ABA50909">
    <property type="protein sequence ID" value="ABA50909"/>
    <property type="gene ID" value="BURPS1710b_0181"/>
</dbReference>
<dbReference type="KEGG" id="bpm:BURPS1710b_0181"/>
<dbReference type="HOGENOM" id="CLU_010091_2_1_4"/>
<dbReference type="Proteomes" id="UP000002700">
    <property type="component" value="Chromosome I"/>
</dbReference>
<dbReference type="GO" id="GO:0005886">
    <property type="term" value="C:plasma membrane"/>
    <property type="evidence" value="ECO:0007669"/>
    <property type="project" value="UniProtKB-SubCell"/>
</dbReference>
<dbReference type="GO" id="GO:0045259">
    <property type="term" value="C:proton-transporting ATP synthase complex"/>
    <property type="evidence" value="ECO:0007669"/>
    <property type="project" value="UniProtKB-KW"/>
</dbReference>
<dbReference type="GO" id="GO:0043531">
    <property type="term" value="F:ADP binding"/>
    <property type="evidence" value="ECO:0007669"/>
    <property type="project" value="TreeGrafter"/>
</dbReference>
<dbReference type="GO" id="GO:0005524">
    <property type="term" value="F:ATP binding"/>
    <property type="evidence" value="ECO:0007669"/>
    <property type="project" value="UniProtKB-UniRule"/>
</dbReference>
<dbReference type="GO" id="GO:0046933">
    <property type="term" value="F:proton-transporting ATP synthase activity, rotational mechanism"/>
    <property type="evidence" value="ECO:0007669"/>
    <property type="project" value="UniProtKB-UniRule"/>
</dbReference>
<dbReference type="CDD" id="cd18113">
    <property type="entry name" value="ATP-synt_F1_alpha_C"/>
    <property type="match status" value="1"/>
</dbReference>
<dbReference type="CDD" id="cd18116">
    <property type="entry name" value="ATP-synt_F1_alpha_N"/>
    <property type="match status" value="1"/>
</dbReference>
<dbReference type="CDD" id="cd01132">
    <property type="entry name" value="F1-ATPase_alpha_CD"/>
    <property type="match status" value="1"/>
</dbReference>
<dbReference type="FunFam" id="1.20.150.20:FF:000001">
    <property type="entry name" value="ATP synthase subunit alpha"/>
    <property type="match status" value="1"/>
</dbReference>
<dbReference type="FunFam" id="2.40.30.20:FF:000001">
    <property type="entry name" value="ATP synthase subunit alpha"/>
    <property type="match status" value="1"/>
</dbReference>
<dbReference type="FunFam" id="3.40.50.300:FF:000002">
    <property type="entry name" value="ATP synthase subunit alpha"/>
    <property type="match status" value="1"/>
</dbReference>
<dbReference type="Gene3D" id="2.40.30.20">
    <property type="match status" value="1"/>
</dbReference>
<dbReference type="Gene3D" id="1.20.150.20">
    <property type="entry name" value="ATP synthase alpha/beta chain, C-terminal domain"/>
    <property type="match status" value="1"/>
</dbReference>
<dbReference type="Gene3D" id="3.40.50.300">
    <property type="entry name" value="P-loop containing nucleotide triphosphate hydrolases"/>
    <property type="match status" value="1"/>
</dbReference>
<dbReference type="HAMAP" id="MF_01346">
    <property type="entry name" value="ATP_synth_alpha_bact"/>
    <property type="match status" value="1"/>
</dbReference>
<dbReference type="InterPro" id="IPR023366">
    <property type="entry name" value="ATP_synth_asu-like_sf"/>
</dbReference>
<dbReference type="InterPro" id="IPR000793">
    <property type="entry name" value="ATP_synth_asu_C"/>
</dbReference>
<dbReference type="InterPro" id="IPR038376">
    <property type="entry name" value="ATP_synth_asu_C_sf"/>
</dbReference>
<dbReference type="InterPro" id="IPR033732">
    <property type="entry name" value="ATP_synth_F1_a_nt-bd_dom"/>
</dbReference>
<dbReference type="InterPro" id="IPR005294">
    <property type="entry name" value="ATP_synth_F1_asu"/>
</dbReference>
<dbReference type="InterPro" id="IPR020003">
    <property type="entry name" value="ATPase_a/bsu_AS"/>
</dbReference>
<dbReference type="InterPro" id="IPR004100">
    <property type="entry name" value="ATPase_F1/V1/A1_a/bsu_N"/>
</dbReference>
<dbReference type="InterPro" id="IPR036121">
    <property type="entry name" value="ATPase_F1/V1/A1_a/bsu_N_sf"/>
</dbReference>
<dbReference type="InterPro" id="IPR000194">
    <property type="entry name" value="ATPase_F1/V1/A1_a/bsu_nucl-bd"/>
</dbReference>
<dbReference type="InterPro" id="IPR027417">
    <property type="entry name" value="P-loop_NTPase"/>
</dbReference>
<dbReference type="NCBIfam" id="TIGR00962">
    <property type="entry name" value="atpA"/>
    <property type="match status" value="1"/>
</dbReference>
<dbReference type="NCBIfam" id="NF009884">
    <property type="entry name" value="PRK13343.1"/>
    <property type="match status" value="1"/>
</dbReference>
<dbReference type="PANTHER" id="PTHR48082">
    <property type="entry name" value="ATP SYNTHASE SUBUNIT ALPHA, MITOCHONDRIAL"/>
    <property type="match status" value="1"/>
</dbReference>
<dbReference type="PANTHER" id="PTHR48082:SF2">
    <property type="entry name" value="ATP SYNTHASE SUBUNIT ALPHA, MITOCHONDRIAL"/>
    <property type="match status" value="1"/>
</dbReference>
<dbReference type="Pfam" id="PF00006">
    <property type="entry name" value="ATP-synt_ab"/>
    <property type="match status" value="1"/>
</dbReference>
<dbReference type="Pfam" id="PF00306">
    <property type="entry name" value="ATP-synt_ab_C"/>
    <property type="match status" value="1"/>
</dbReference>
<dbReference type="Pfam" id="PF02874">
    <property type="entry name" value="ATP-synt_ab_N"/>
    <property type="match status" value="1"/>
</dbReference>
<dbReference type="PIRSF" id="PIRSF039088">
    <property type="entry name" value="F_ATPase_subunit_alpha"/>
    <property type="match status" value="1"/>
</dbReference>
<dbReference type="SUPFAM" id="SSF47917">
    <property type="entry name" value="C-terminal domain of alpha and beta subunits of F1 ATP synthase"/>
    <property type="match status" value="1"/>
</dbReference>
<dbReference type="SUPFAM" id="SSF50615">
    <property type="entry name" value="N-terminal domain of alpha and beta subunits of F1 ATP synthase"/>
    <property type="match status" value="1"/>
</dbReference>
<dbReference type="SUPFAM" id="SSF52540">
    <property type="entry name" value="P-loop containing nucleoside triphosphate hydrolases"/>
    <property type="match status" value="1"/>
</dbReference>
<dbReference type="PROSITE" id="PS00152">
    <property type="entry name" value="ATPASE_ALPHA_BETA"/>
    <property type="match status" value="1"/>
</dbReference>
<organism>
    <name type="scientific">Burkholderia pseudomallei (strain 1710b)</name>
    <dbReference type="NCBI Taxonomy" id="320372"/>
    <lineage>
        <taxon>Bacteria</taxon>
        <taxon>Pseudomonadati</taxon>
        <taxon>Pseudomonadota</taxon>
        <taxon>Betaproteobacteria</taxon>
        <taxon>Burkholderiales</taxon>
        <taxon>Burkholderiaceae</taxon>
        <taxon>Burkholderia</taxon>
        <taxon>pseudomallei group</taxon>
    </lineage>
</organism>
<proteinExistence type="inferred from homology"/>
<protein>
    <recommendedName>
        <fullName evidence="1">ATP synthase subunit alpha 1</fullName>
        <ecNumber evidence="1">7.1.2.2</ecNumber>
    </recommendedName>
    <alternativeName>
        <fullName evidence="1">ATP synthase F1 sector subunit alpha 1</fullName>
    </alternativeName>
    <alternativeName>
        <fullName evidence="1">F-ATPase subunit alpha 1</fullName>
    </alternativeName>
</protein>
<name>ATPA1_BURP1</name>
<reference key="1">
    <citation type="journal article" date="2010" name="Genome Biol. Evol.">
        <title>Continuing evolution of Burkholderia mallei through genome reduction and large-scale rearrangements.</title>
        <authorList>
            <person name="Losada L."/>
            <person name="Ronning C.M."/>
            <person name="DeShazer D."/>
            <person name="Woods D."/>
            <person name="Fedorova N."/>
            <person name="Kim H.S."/>
            <person name="Shabalina S.A."/>
            <person name="Pearson T.R."/>
            <person name="Brinkac L."/>
            <person name="Tan P."/>
            <person name="Nandi T."/>
            <person name="Crabtree J."/>
            <person name="Badger J."/>
            <person name="Beckstrom-Sternberg S."/>
            <person name="Saqib M."/>
            <person name="Schutzer S.E."/>
            <person name="Keim P."/>
            <person name="Nierman W.C."/>
        </authorList>
    </citation>
    <scope>NUCLEOTIDE SEQUENCE [LARGE SCALE GENOMIC DNA]</scope>
    <source>
        <strain>1710b</strain>
    </source>
</reference>
<feature type="chain" id="PRO_0000238221" description="ATP synthase subunit alpha 1">
    <location>
        <begin position="1"/>
        <end position="513"/>
    </location>
</feature>
<feature type="binding site" evidence="1">
    <location>
        <begin position="169"/>
        <end position="176"/>
    </location>
    <ligand>
        <name>ATP</name>
        <dbReference type="ChEBI" id="CHEBI:30616"/>
    </ligand>
</feature>
<feature type="site" description="Required for activity" evidence="1">
    <location>
        <position position="373"/>
    </location>
</feature>
<comment type="function">
    <text evidence="1">Produces ATP from ADP in the presence of a proton gradient across the membrane. The alpha chain is a regulatory subunit.</text>
</comment>
<comment type="catalytic activity">
    <reaction evidence="1">
        <text>ATP + H2O + 4 H(+)(in) = ADP + phosphate + 5 H(+)(out)</text>
        <dbReference type="Rhea" id="RHEA:57720"/>
        <dbReference type="ChEBI" id="CHEBI:15377"/>
        <dbReference type="ChEBI" id="CHEBI:15378"/>
        <dbReference type="ChEBI" id="CHEBI:30616"/>
        <dbReference type="ChEBI" id="CHEBI:43474"/>
        <dbReference type="ChEBI" id="CHEBI:456216"/>
        <dbReference type="EC" id="7.1.2.2"/>
    </reaction>
</comment>
<comment type="subunit">
    <text evidence="1">F-type ATPases have 2 components, CF(1) - the catalytic core - and CF(0) - the membrane proton channel. CF(1) has five subunits: alpha(3), beta(3), gamma(1), delta(1), epsilon(1). CF(0) has three main subunits: a(1), b(2) and c(9-12). The alpha and beta chains form an alternating ring which encloses part of the gamma chain. CF(1) is attached to CF(0) by a central stalk formed by the gamma and epsilon chains, while a peripheral stalk is formed by the delta and b chains.</text>
</comment>
<comment type="subcellular location">
    <subcellularLocation>
        <location evidence="1">Cell inner membrane</location>
        <topology evidence="1">Peripheral membrane protein</topology>
    </subcellularLocation>
</comment>
<comment type="similarity">
    <text evidence="1">Belongs to the ATPase alpha/beta chains family.</text>
</comment>
<gene>
    <name evidence="1" type="primary">atpA1</name>
    <name type="ordered locus">BURPS1710b_0181</name>
</gene>
<evidence type="ECO:0000255" key="1">
    <source>
        <dbReference type="HAMAP-Rule" id="MF_01346"/>
    </source>
</evidence>
<keyword id="KW-0066">ATP synthesis</keyword>
<keyword id="KW-0067">ATP-binding</keyword>
<keyword id="KW-0997">Cell inner membrane</keyword>
<keyword id="KW-1003">Cell membrane</keyword>
<keyword id="KW-0139">CF(1)</keyword>
<keyword id="KW-0375">Hydrogen ion transport</keyword>
<keyword id="KW-0406">Ion transport</keyword>
<keyword id="KW-0472">Membrane</keyword>
<keyword id="KW-0547">Nucleotide-binding</keyword>
<keyword id="KW-1278">Translocase</keyword>
<keyword id="KW-0813">Transport</keyword>
<sequence>MQLNPSEISELIKSRIQGLEASADVRNQGTVISVTDGIVRIHGLSDVMQGEMLEFPGNTFGLALNLERDSVGAVILGEYEHISEGDIVKTTGRILEVPVGPELVGRVVDALGNPIDGKGPVNAKLTDAIEKIAPGVIWRKSVSQPVQTGLKSIDSMVPIGRGQRELIIGDRQCGKTAVAIDTIINQKGKDLICIYVAIGQKASSIMNVVRKLEETGALEYTIVVAASASESAAMQYLAPYAGCTMGEYFRDRGQDALIIYDDLTKQAWAYRQISLLLRRPPGREAYPGDVFYLHSRLLERAARVSEEYVEKFTNGEVKGKSGSLTALPVIETQAGDVTAFVPTNVISITDGQIFLETDLFNAGIRPAINAGVSVSRVGGAAQTKVVKKLSGGIRTDLAQYRELAAFAQFASDLDEATRKQLERGRRVTELLKQPQYQPLQVWELAVSLFSANNGYLDDLDVKDVLPFEKGLREYLKTSHADLIKRIEDTKDLSKDDESALHAALKDFKKSGAY</sequence>